<name>RPOZ_CAMLR</name>
<proteinExistence type="inferred from homology"/>
<reference key="1">
    <citation type="journal article" date="2008" name="Foodborne Pathog. Dis.">
        <title>The complete genome sequence and analysis of the human pathogen Campylobacter lari.</title>
        <authorList>
            <person name="Miller W.G."/>
            <person name="Wang G."/>
            <person name="Binnewies T.T."/>
            <person name="Parker C.T."/>
        </authorList>
    </citation>
    <scope>NUCLEOTIDE SEQUENCE [LARGE SCALE GENOMIC DNA]</scope>
    <source>
        <strain>RM2100 / D67 / ATCC BAA-1060</strain>
    </source>
</reference>
<organism>
    <name type="scientific">Campylobacter lari (strain RM2100 / D67 / ATCC BAA-1060)</name>
    <dbReference type="NCBI Taxonomy" id="306263"/>
    <lineage>
        <taxon>Bacteria</taxon>
        <taxon>Pseudomonadati</taxon>
        <taxon>Campylobacterota</taxon>
        <taxon>Epsilonproteobacteria</taxon>
        <taxon>Campylobacterales</taxon>
        <taxon>Campylobacteraceae</taxon>
        <taxon>Campylobacter</taxon>
    </lineage>
</organism>
<protein>
    <recommendedName>
        <fullName evidence="1">DNA-directed RNA polymerase subunit omega</fullName>
        <shortName evidence="1">RNAP omega subunit</shortName>
        <ecNumber evidence="1">2.7.7.6</ecNumber>
    </recommendedName>
    <alternativeName>
        <fullName evidence="1">RNA polymerase omega subunit</fullName>
    </alternativeName>
    <alternativeName>
        <fullName evidence="1">Transcriptase subunit omega</fullName>
    </alternativeName>
</protein>
<comment type="function">
    <text evidence="1">Promotes RNA polymerase assembly. Latches the N- and C-terminal regions of the beta' subunit thereby facilitating its interaction with the beta and alpha subunits.</text>
</comment>
<comment type="catalytic activity">
    <reaction evidence="1">
        <text>RNA(n) + a ribonucleoside 5'-triphosphate = RNA(n+1) + diphosphate</text>
        <dbReference type="Rhea" id="RHEA:21248"/>
        <dbReference type="Rhea" id="RHEA-COMP:14527"/>
        <dbReference type="Rhea" id="RHEA-COMP:17342"/>
        <dbReference type="ChEBI" id="CHEBI:33019"/>
        <dbReference type="ChEBI" id="CHEBI:61557"/>
        <dbReference type="ChEBI" id="CHEBI:140395"/>
        <dbReference type="EC" id="2.7.7.6"/>
    </reaction>
</comment>
<comment type="subunit">
    <text evidence="1">The RNAP catalytic core consists of 2 alpha, 1 beta, 1 beta' and 1 omega subunit. When a sigma factor is associated with the core the holoenzyme is formed, which can initiate transcription.</text>
</comment>
<comment type="similarity">
    <text evidence="1">Belongs to the RNA polymerase subunit omega family.</text>
</comment>
<dbReference type="EC" id="2.7.7.6" evidence="1"/>
<dbReference type="EMBL" id="CP000932">
    <property type="protein sequence ID" value="ACM63945.1"/>
    <property type="molecule type" value="Genomic_DNA"/>
</dbReference>
<dbReference type="RefSeq" id="WP_012661328.1">
    <property type="nucleotide sequence ID" value="NC_012039.1"/>
</dbReference>
<dbReference type="SMR" id="B9KFW0"/>
<dbReference type="STRING" id="306263.Cla_0616"/>
<dbReference type="KEGG" id="cla:CLA_0616"/>
<dbReference type="PATRIC" id="fig|306263.5.peg.596"/>
<dbReference type="eggNOG" id="COG1758">
    <property type="taxonomic scope" value="Bacteria"/>
</dbReference>
<dbReference type="HOGENOM" id="CLU_125406_3_0_7"/>
<dbReference type="Proteomes" id="UP000007727">
    <property type="component" value="Chromosome"/>
</dbReference>
<dbReference type="GO" id="GO:0000428">
    <property type="term" value="C:DNA-directed RNA polymerase complex"/>
    <property type="evidence" value="ECO:0007669"/>
    <property type="project" value="UniProtKB-KW"/>
</dbReference>
<dbReference type="GO" id="GO:0003677">
    <property type="term" value="F:DNA binding"/>
    <property type="evidence" value="ECO:0007669"/>
    <property type="project" value="UniProtKB-UniRule"/>
</dbReference>
<dbReference type="GO" id="GO:0003899">
    <property type="term" value="F:DNA-directed RNA polymerase activity"/>
    <property type="evidence" value="ECO:0007669"/>
    <property type="project" value="UniProtKB-UniRule"/>
</dbReference>
<dbReference type="GO" id="GO:0006351">
    <property type="term" value="P:DNA-templated transcription"/>
    <property type="evidence" value="ECO:0007669"/>
    <property type="project" value="UniProtKB-UniRule"/>
</dbReference>
<dbReference type="Gene3D" id="3.90.940.10">
    <property type="match status" value="1"/>
</dbReference>
<dbReference type="HAMAP" id="MF_00366">
    <property type="entry name" value="RNApol_bact_RpoZ"/>
    <property type="match status" value="1"/>
</dbReference>
<dbReference type="InterPro" id="IPR003716">
    <property type="entry name" value="DNA-dir_RNA_pol_omega"/>
</dbReference>
<dbReference type="InterPro" id="IPR006110">
    <property type="entry name" value="Pol_omega/Rpo6/RPB6"/>
</dbReference>
<dbReference type="InterPro" id="IPR036161">
    <property type="entry name" value="RPB6/omega-like_sf"/>
</dbReference>
<dbReference type="NCBIfam" id="NF001579">
    <property type="entry name" value="PRK00392.6-2"/>
    <property type="match status" value="1"/>
</dbReference>
<dbReference type="NCBIfam" id="TIGR00690">
    <property type="entry name" value="rpoZ"/>
    <property type="match status" value="1"/>
</dbReference>
<dbReference type="Pfam" id="PF01192">
    <property type="entry name" value="RNA_pol_Rpb6"/>
    <property type="match status" value="1"/>
</dbReference>
<dbReference type="SMART" id="SM01409">
    <property type="entry name" value="RNA_pol_Rpb6"/>
    <property type="match status" value="1"/>
</dbReference>
<dbReference type="SUPFAM" id="SSF63562">
    <property type="entry name" value="RPB6/omega subunit-like"/>
    <property type="match status" value="1"/>
</dbReference>
<gene>
    <name evidence="1" type="primary">rpoZ</name>
    <name type="ordered locus">Cla_0616</name>
</gene>
<feature type="chain" id="PRO_1000194784" description="DNA-directed RNA polymerase subunit omega">
    <location>
        <begin position="1"/>
        <end position="72"/>
    </location>
</feature>
<keyword id="KW-0240">DNA-directed RNA polymerase</keyword>
<keyword id="KW-0548">Nucleotidyltransferase</keyword>
<keyword id="KW-1185">Reference proteome</keyword>
<keyword id="KW-0804">Transcription</keyword>
<keyword id="KW-0808">Transferase</keyword>
<evidence type="ECO:0000255" key="1">
    <source>
        <dbReference type="HAMAP-Rule" id="MF_00366"/>
    </source>
</evidence>
<sequence length="72" mass="8158">MRVEQIAAKALKKLKDDRYKLALVVAKRAEELANGAEPLVNLDKNKYKYTDIALHEIAEDKIVLEGFVETSK</sequence>
<accession>B9KFW0</accession>